<sequence length="1089" mass="122683">MGTSHQVFLVLSCLLTGPGLISCQLLLPSILPNENEKIVQLNSSFSLRCVGESEVSWQHPMSEEDDPNVEIRSEENNSGLFVTVLEVVNASAAHTGWYTCYYNHTQTDESEIEGRHIYIYVPDPDMAFVPLGMTDSLVIVEEDDSAIIPCRTTDPETQVTLHNNGRLVPASYDSRQGFNGTFSVGPYICEATVKGRTFKTSEFNVYALKATSELNLEMDARQTVYKAGETIVVTCAVFNNEVVDLQWTYPGEVRNKGITMLEEIKLPSIKLVYTLTVPKATVKDSGEYECAARQATKEVKEMKRVTISVHEKGFVEIEPTFGQLEAVNLHEVREFVVEVQAYPTPRISWLKDNLTLIENLTEITTDVQKSQETRYQSKLKLIRAKEEDSGHYTIIVQNEDDVKSYTFELSTLVPASILDLVDDHHGSGGGQTVRCTAEGTPLPEIDWMICKHIKKCNNDTSWTVLASNVSNIITELPRRGRSTVEGRVSFAKVEETIAVRCLAKNNLSVVARELKLVAPTLRSELTVAAAVLVLLVIVIVSLIVLVVIWKQKPRYEIRWRVIESISPDGHEYIYVDPMQLPYDSRWEFPRDGLVLGRILGSGAFGKVVEGTAYGLSRSQPVMKVAVKMLKPTARSSEKQALMSELKIMTHLGPHLNIVNLLGACTKSGPIYIITEYCFYGDLVNYLHKNRDSFMSQHPEKPKKDLDIFGLNPADESTRSYVILSFENNGDYMDMKQADTTQYVPMLERKEVSKYSDIQRSLYDRPASYKKKSMLDSEVKNLLSDDDSEGLTLLDLLSFTYQVARGMEFLASKNCVHRDLAARNVLLAQGKIVKICDFGLARDIMHDSNYVSKGSTFLPVKWMAPESIFDNLYTTLSDVWSYGILLWEIFSLGGTPYPGMMVDSTFYNKIKSGYRMAKPDHATSEVYEIMVQCWNSEPEKRPSFYHLSEIVENLLPGQYKKSYEKIHLDFLKSDHPAVARMRVDSDNAYIGVTYKNEEDKLKDWEGGLDEQRLSADSGYIIPLPDIDPVPEEEDLGKRNRHSSQTSEESAIETGSSSSTFIKREDETIEDIDMMDDIGIDSSDLVEDSFL</sequence>
<protein>
    <recommendedName>
        <fullName>Platelet-derived growth factor receptor alpha</fullName>
        <shortName>PDGF-R-alpha</shortName>
        <shortName>PDGFR-alpha</shortName>
        <ecNumber>2.7.10.1</ecNumber>
    </recommendedName>
    <alternativeName>
        <fullName>Alpha platelet-derived growth factor receptor</fullName>
    </alternativeName>
    <alternativeName>
        <fullName>Alpha-type platelet-derived growth factor receptor</fullName>
    </alternativeName>
    <alternativeName>
        <fullName>CD140 antigen-like family member A</fullName>
    </alternativeName>
    <alternativeName>
        <fullName>Platelet-derived growth factor alpha receptor</fullName>
    </alternativeName>
    <cdAntigenName>CD140a</cdAntigenName>
</protein>
<feature type="signal peptide" evidence="3">
    <location>
        <begin position="1"/>
        <end position="24"/>
    </location>
</feature>
<feature type="chain" id="PRO_0000016761" description="Platelet-derived growth factor receptor alpha">
    <location>
        <begin position="25"/>
        <end position="1089"/>
    </location>
</feature>
<feature type="topological domain" description="Extracellular" evidence="3">
    <location>
        <begin position="25"/>
        <end position="528"/>
    </location>
</feature>
<feature type="transmembrane region" description="Helical" evidence="3">
    <location>
        <begin position="529"/>
        <end position="549"/>
    </location>
</feature>
<feature type="topological domain" description="Cytoplasmic" evidence="3">
    <location>
        <begin position="550"/>
        <end position="1089"/>
    </location>
</feature>
<feature type="domain" description="Ig-like C2-type 1">
    <location>
        <begin position="25"/>
        <end position="113"/>
    </location>
</feature>
<feature type="domain" description="Ig-like C2-type 2">
    <location>
        <begin position="117"/>
        <end position="201"/>
    </location>
</feature>
<feature type="domain" description="Ig-like C2-type 3">
    <location>
        <begin position="202"/>
        <end position="306"/>
    </location>
</feature>
<feature type="domain" description="Ig-like C2-type 4">
    <location>
        <begin position="319"/>
        <end position="410"/>
    </location>
</feature>
<feature type="domain" description="Ig-like C2-type 5">
    <location>
        <begin position="414"/>
        <end position="517"/>
    </location>
</feature>
<feature type="domain" description="Protein kinase" evidence="5">
    <location>
        <begin position="593"/>
        <end position="954"/>
    </location>
</feature>
<feature type="region of interest" description="Disordered" evidence="7">
    <location>
        <begin position="1018"/>
        <end position="1089"/>
    </location>
</feature>
<feature type="compositionally biased region" description="Polar residues" evidence="7">
    <location>
        <begin position="1041"/>
        <end position="1059"/>
    </location>
</feature>
<feature type="compositionally biased region" description="Acidic residues" evidence="7">
    <location>
        <begin position="1065"/>
        <end position="1089"/>
    </location>
</feature>
<feature type="active site" description="Proton acceptor" evidence="5 6">
    <location>
        <position position="818"/>
    </location>
</feature>
<feature type="binding site" evidence="5">
    <location>
        <begin position="599"/>
        <end position="607"/>
    </location>
    <ligand>
        <name>ATP</name>
        <dbReference type="ChEBI" id="CHEBI:30616"/>
    </ligand>
</feature>
<feature type="binding site" evidence="5">
    <location>
        <position position="627"/>
    </location>
    <ligand>
        <name>ATP</name>
        <dbReference type="ChEBI" id="CHEBI:30616"/>
    </ligand>
</feature>
<feature type="modified residue" description="Phosphotyrosine; by autocatalysis" evidence="2">
    <location>
        <position position="572"/>
    </location>
</feature>
<feature type="modified residue" description="Phosphotyrosine; by autocatalysis" evidence="2">
    <location>
        <position position="574"/>
    </location>
</feature>
<feature type="modified residue" description="Phosphotyrosine; by autocatalysis" evidence="2 17">
    <location>
        <position position="720"/>
    </location>
</feature>
<feature type="modified residue" description="Phosphotyrosine; by autocatalysis" evidence="2">
    <location>
        <position position="731"/>
    </location>
</feature>
<feature type="modified residue" description="Phosphotyrosine; by autocatalysis" evidence="2">
    <location>
        <position position="742"/>
    </location>
</feature>
<feature type="modified residue" description="Phosphotyrosine; by autocatalysis" evidence="2">
    <location>
        <position position="754"/>
    </location>
</feature>
<feature type="modified residue" description="Phosphotyrosine; by autocatalysis" evidence="2">
    <location>
        <position position="762"/>
    </location>
</feature>
<feature type="modified residue" description="Phosphotyrosine; by autocatalysis" evidence="2">
    <location>
        <position position="768"/>
    </location>
</feature>
<feature type="modified residue" description="Phosphotyrosine; by autocatalysis" evidence="1">
    <location>
        <position position="849"/>
    </location>
</feature>
<feature type="modified residue" description="Phosphotyrosine; by autocatalysis" evidence="2">
    <location>
        <position position="988"/>
    </location>
</feature>
<feature type="modified residue" description="Phosphotyrosine; by autocatalysis" evidence="2">
    <location>
        <position position="1018"/>
    </location>
</feature>
<feature type="glycosylation site" description="N-linked (GlcNAc...) asparagine" evidence="3">
    <location>
        <position position="42"/>
    </location>
</feature>
<feature type="glycosylation site" description="N-linked (GlcNAc...) asparagine" evidence="3">
    <location>
        <position position="76"/>
    </location>
</feature>
<feature type="glycosylation site" description="N-linked (GlcNAc...) asparagine" evidence="3">
    <location>
        <position position="89"/>
    </location>
</feature>
<feature type="glycosylation site" description="N-linked (GlcNAc...) asparagine" evidence="3">
    <location>
        <position position="103"/>
    </location>
</feature>
<feature type="glycosylation site" description="N-linked (GlcNAc...) asparagine" evidence="3">
    <location>
        <position position="179"/>
    </location>
</feature>
<feature type="glycosylation site" description="N-linked (GlcNAc...) asparagine" evidence="3">
    <location>
        <position position="353"/>
    </location>
</feature>
<feature type="glycosylation site" description="N-linked (GlcNAc...) asparagine" evidence="3">
    <location>
        <position position="359"/>
    </location>
</feature>
<feature type="glycosylation site" description="N-linked (GlcNAc...) asparagine" evidence="3">
    <location>
        <position position="458"/>
    </location>
</feature>
<feature type="glycosylation site" description="N-linked (GlcNAc...) asparagine" evidence="3">
    <location>
        <position position="468"/>
    </location>
</feature>
<feature type="glycosylation site" description="N-linked (GlcNAc...) asparagine" evidence="3">
    <location>
        <position position="506"/>
    </location>
</feature>
<feature type="disulfide bond" evidence="4">
    <location>
        <begin position="49"/>
        <end position="100"/>
    </location>
</feature>
<feature type="disulfide bond" evidence="4">
    <location>
        <begin position="150"/>
        <end position="189"/>
    </location>
</feature>
<feature type="disulfide bond" evidence="4">
    <location>
        <begin position="235"/>
        <end position="290"/>
    </location>
</feature>
<feature type="disulfide bond" evidence="4">
    <location>
        <begin position="435"/>
        <end position="501"/>
    </location>
</feature>
<feature type="splice variant" id="VSP_031877" description="In isoform 2." evidence="16">
    <original>DSEVKNLLSDDDSEGL</original>
    <variation>GKSAHAHSGKYDLSVV</variation>
    <location>
        <begin position="775"/>
        <end position="790"/>
    </location>
</feature>
<feature type="splice variant" id="VSP_031878" description="In isoform 2." evidence="16">
    <location>
        <begin position="791"/>
        <end position="1089"/>
    </location>
</feature>
<feature type="sequence conflict" description="In Ref. 1; AAA39733 and 2; AAA39904." evidence="17" ref="1 2">
    <original>D</original>
    <variation>E</variation>
    <location>
        <position position="65"/>
    </location>
</feature>
<feature type="sequence conflict" description="In Ref. 1; AAA39733." evidence="17" ref="1">
    <original>T</original>
    <variation>A</variation>
    <location>
        <position position="192"/>
    </location>
</feature>
<feature type="sequence conflict" description="In Ref. 1; AAA39733." evidence="17" ref="1">
    <original>E</original>
    <variation>A</variation>
    <location>
        <position position="202"/>
    </location>
</feature>
<feature type="sequence conflict" description="In Ref. 1; AAA39733." evidence="17" ref="1">
    <original>E</original>
    <variation>G</variation>
    <location>
        <position position="252"/>
    </location>
</feature>
<feature type="sequence conflict" description="In Ref. 1; AAA39733." evidence="17" ref="1">
    <original>L</original>
    <variation>V</variation>
    <location>
        <position position="271"/>
    </location>
</feature>
<feature type="sequence conflict" description="In Ref. 1; AAA39733." evidence="17" ref="1">
    <original>G</original>
    <variation>S</variation>
    <location>
        <position position="322"/>
    </location>
</feature>
<feature type="sequence conflict" description="In Ref. 1; AAA39733." evidence="17" ref="1">
    <original>A</original>
    <variation>P</variation>
    <location>
        <position position="326"/>
    </location>
</feature>
<feature type="sequence conflict" description="In Ref. 1; AAA39733." evidence="17" ref="1">
    <original>GT</original>
    <variation>EG</variation>
    <location>
        <begin position="439"/>
        <end position="440"/>
    </location>
</feature>
<feature type="sequence conflict" description="In Ref. 3; BAE37548." evidence="17" ref="3">
    <original>I</original>
    <variation>V</variation>
    <location>
        <position position="472"/>
    </location>
</feature>
<feature type="sequence conflict" description="In Ref. 1; AAA39733." evidence="17" ref="1">
    <original>A</original>
    <variation>E</variation>
    <location>
        <position position="529"/>
    </location>
</feature>
<feature type="sequence conflict" description="In Ref. 1; AAA39733." evidence="17" ref="1">
    <original>A</original>
    <variation>D</variation>
    <location>
        <position position="737"/>
    </location>
</feature>
<feature type="sequence conflict" description="In Ref. 1; AAA39733." evidence="17" ref="1">
    <original>Y</original>
    <variation>D</variation>
    <location>
        <position position="849"/>
    </location>
</feature>
<feature type="sequence conflict" description="In Ref. 1; AAA39733." evidence="17" ref="1">
    <original>E</original>
    <variation>D</variation>
    <location>
        <position position="936"/>
    </location>
</feature>
<feature type="sequence conflict" description="In Ref. 1; AAA39733." evidence="17" ref="1">
    <original>V</original>
    <variation>L</variation>
    <location>
        <position position="950"/>
    </location>
</feature>
<feature type="sequence conflict" description="In Ref. 2; AAA39904." evidence="17" ref="2">
    <original>G</original>
    <variation>S</variation>
    <location>
        <position position="1005"/>
    </location>
</feature>
<comment type="function">
    <text evidence="8 11 12 14 15">Tyrosine-protein kinase that acts as a cell-surface receptor for PDGFA, PDGFB and PDGFC and plays an essential role in the regulation of embryonic development, cell proliferation, survival and chemotaxis. Depending on the context, promotes or inhibits cell proliferation and cell migration. Plays an important role in the differentiation of bone marrow-derived mesenchymal stem cells. Required for normal skeleton development and cephalic closure during embryonic development. Required for normal development of the mucosa lining the gastrointestinal tract, and for recruitment of mesenchymal cells and normal development of intestinal villi. Plays a role in cell migration and chemotaxis in wound healing. Plays a role in platelet activation, secretion of agonists from platelet granules, and in thrombin-induced platelet aggregation. Binding of its cognate ligands - homodimeric PDGFA, homodimeric PDGFB, heterodimers formed by PDGFA and PDGFB or homodimeric PDGFC -leads to the activation of several signaling cascades; the response depends on the nature of the bound ligand and is modulated by the formation of heterodimers between PDGFRA and PDGFRB. Phosphorylates PIK3R1, PLCG1, and PTPN11. Activation of PLCG1 leads to the production of the cellular signaling molecules diacylglycerol and inositol 1,4,5-trisphosphate, mobilization of cytosolic Ca(2+) and the activation of protein kinase C. Phosphorylates PIK3R1, the regulatory subunit of phosphatidylinositol 3-kinase, and thereby mediates activation of the AKT1 signaling pathway. Mediates activation of HRAS and of the MAP kinases MAPK1/ERK2 and/or MAPK3/ERK1. Promotes activation of STAT family members STAT1, STAT3 and STAT5A and/or STAT5B. Receptor signaling is down-regulated by protein phosphatases that dephosphorylate the receptor and its down-stream effectors, and by rapid internalization of the activated receptor.</text>
</comment>
<comment type="catalytic activity">
    <reaction evidence="6">
        <text>L-tyrosyl-[protein] + ATP = O-phospho-L-tyrosyl-[protein] + ADP + H(+)</text>
        <dbReference type="Rhea" id="RHEA:10596"/>
        <dbReference type="Rhea" id="RHEA-COMP:10136"/>
        <dbReference type="Rhea" id="RHEA-COMP:20101"/>
        <dbReference type="ChEBI" id="CHEBI:15378"/>
        <dbReference type="ChEBI" id="CHEBI:30616"/>
        <dbReference type="ChEBI" id="CHEBI:46858"/>
        <dbReference type="ChEBI" id="CHEBI:61978"/>
        <dbReference type="ChEBI" id="CHEBI:456216"/>
        <dbReference type="EC" id="2.7.10.1"/>
    </reaction>
</comment>
<comment type="activity regulation">
    <text evidence="1">Present in an inactive conformation in the absence of bound ligand. Binding of PDGFA and/or PDGFB leads to dimerization and activation by autophosphorylation on tyrosine residues. Inhibited by imatinib, nilotinib and sorafenib (By similarity).</text>
</comment>
<comment type="subunit">
    <text evidence="2 14">Interacts with homodimeric PDGFA, PDGFB and PDGFC, and with heterodimers formed by PDGFA and PDGFB. Monomer in the absence of bound ligand. Interaction with dimeric PDGFA, PDGFB and/or PDGFC leads to receptor dimerization, where both PDGFRA homodimers and heterodimers with PDGFRB are observed. Interacts (tyrosine phosphorylated) with SHB (via SH2 domain). Interacts (tyrosine phosphorylated) with SHF (via SH2 domain). Interacts (tyrosine phosphorylated) with SRC (via SH2 domain). Interacts (tyrosine phosphorylated) with PIK3R1. Interacts (tyrosine phosphorylated) with PLCG1 (via SH2 domain). Interacts (tyrosine phosphorylated) with CRK, GRB2 and GRB7 (By similarity). Interacts with CD248; this interaction promotes PDGF receptor signaling pathway (PubMed:30986375).</text>
</comment>
<comment type="subcellular location">
    <subcellularLocation>
        <location evidence="2">Cell membrane</location>
        <topology evidence="2">Single-pass type I membrane protein</topology>
    </subcellularLocation>
    <subcellularLocation>
        <location evidence="13">Cell projection</location>
        <location evidence="13">Cilium</location>
    </subcellularLocation>
    <subcellularLocation>
        <location evidence="13">Golgi apparatus</location>
    </subcellularLocation>
</comment>
<comment type="alternative products">
    <event type="alternative splicing"/>
    <isoform>
        <id>P26618-1</id>
        <name>1</name>
        <sequence type="displayed"/>
    </isoform>
    <isoform>
        <id>P26618-2</id>
        <name>2</name>
        <sequence type="described" ref="VSP_031877 VSP_031878"/>
    </isoform>
</comment>
<comment type="tissue specificity">
    <text evidence="9">Focally expressed in cortical interstitial cells and highly expressed in the interstitium of the papillary region. Also expressed by adventitial cells in arterial vessels. Up-regulated in areas of renal fibrosis. In mice with unilateral ureteral obstruction, expression in cortical interstitial cells becomes prominent at day 4 which increases progressively until day 14.</text>
</comment>
<comment type="induction">
    <text evidence="13">Up-regulated by growth arrest.</text>
</comment>
<comment type="PTM">
    <text evidence="13">Ubiquitinated, leading to its internalization and degradation.</text>
</comment>
<comment type="PTM">
    <text evidence="2">Autophosphorylated on tyrosine residues upon ligand binding. Autophosphorylation occurs in trans, i.e. one subunit of the dimeric receptor phosphorylates tyrosine residues on the other subunit. Phosphorylation at Tyr-731 and Tyr-742 is important for interaction with PIK3R1. Phosphorylation at Tyr-720 and Tyr-754 is important for interaction with PTPN11. Phosphorylation at Tyr-762 is important for interaction with CRK. Phosphorylation at Tyr-572 and Tyr-574 is important for interaction with SRC and SRC family members. Phosphorylation at Tyr-988 and Tyr-1018 is important for interaction with PLCG1 (By similarity).</text>
</comment>
<comment type="disruption phenotype">
    <text evidence="8 10 15">Embryonically lethal. Most embryos survive up to 13 dpc, but display important defects in skeleton development, including spina bifida, fusions of cervical vertebrae and ribs, and incomplete fusion of the skull parietal bone. Embryos display also abnormal mucosa lining the gastrointestinal tract, including fewer and misshapen villi and loss of pericryptal mesenchyme. At about 16 dpc, embryos display extensive hemorrhaging.</text>
</comment>
<comment type="similarity">
    <text evidence="5">Belongs to the protein kinase superfamily. Tyr protein kinase family. CSF-1/PDGF receptor subfamily.</text>
</comment>
<keyword id="KW-0025">Alternative splicing</keyword>
<keyword id="KW-0067">ATP-binding</keyword>
<keyword id="KW-1003">Cell membrane</keyword>
<keyword id="KW-0966">Cell projection</keyword>
<keyword id="KW-0145">Chemotaxis</keyword>
<keyword id="KW-0217">Developmental protein</keyword>
<keyword id="KW-1015">Disulfide bond</keyword>
<keyword id="KW-0325">Glycoprotein</keyword>
<keyword id="KW-0333">Golgi apparatus</keyword>
<keyword id="KW-0393">Immunoglobulin domain</keyword>
<keyword id="KW-0418">Kinase</keyword>
<keyword id="KW-0472">Membrane</keyword>
<keyword id="KW-0547">Nucleotide-binding</keyword>
<keyword id="KW-0597">Phosphoprotein</keyword>
<keyword id="KW-0656">Proto-oncogene</keyword>
<keyword id="KW-0675">Receptor</keyword>
<keyword id="KW-1185">Reference proteome</keyword>
<keyword id="KW-0677">Repeat</keyword>
<keyword id="KW-0732">Signal</keyword>
<keyword id="KW-0808">Transferase</keyword>
<keyword id="KW-0812">Transmembrane</keyword>
<keyword id="KW-1133">Transmembrane helix</keyword>
<keyword id="KW-0829">Tyrosine-protein kinase</keyword>
<keyword id="KW-0832">Ubl conjugation</keyword>
<evidence type="ECO:0000250" key="1"/>
<evidence type="ECO:0000250" key="2">
    <source>
        <dbReference type="UniProtKB" id="P16234"/>
    </source>
</evidence>
<evidence type="ECO:0000255" key="3"/>
<evidence type="ECO:0000255" key="4">
    <source>
        <dbReference type="PROSITE-ProRule" id="PRU00114"/>
    </source>
</evidence>
<evidence type="ECO:0000255" key="5">
    <source>
        <dbReference type="PROSITE-ProRule" id="PRU00159"/>
    </source>
</evidence>
<evidence type="ECO:0000255" key="6">
    <source>
        <dbReference type="PROSITE-ProRule" id="PRU10028"/>
    </source>
</evidence>
<evidence type="ECO:0000256" key="7">
    <source>
        <dbReference type="SAM" id="MobiDB-lite"/>
    </source>
</evidence>
<evidence type="ECO:0000269" key="8">
    <source>
    </source>
</evidence>
<evidence type="ECO:0000269" key="9">
    <source>
    </source>
</evidence>
<evidence type="ECO:0000269" key="10">
    <source>
    </source>
</evidence>
<evidence type="ECO:0000269" key="11">
    <source>
    </source>
</evidence>
<evidence type="ECO:0000269" key="12">
    <source>
    </source>
</evidence>
<evidence type="ECO:0000269" key="13">
    <source>
    </source>
</evidence>
<evidence type="ECO:0000269" key="14">
    <source>
    </source>
</evidence>
<evidence type="ECO:0000269" key="15">
    <source>
    </source>
</evidence>
<evidence type="ECO:0000303" key="16">
    <source>
    </source>
</evidence>
<evidence type="ECO:0000305" key="17"/>
<gene>
    <name type="primary">Pdgfra</name>
</gene>
<name>PGFRA_MOUSE</name>
<organism>
    <name type="scientific">Mus musculus</name>
    <name type="common">Mouse</name>
    <dbReference type="NCBI Taxonomy" id="10090"/>
    <lineage>
        <taxon>Eukaryota</taxon>
        <taxon>Metazoa</taxon>
        <taxon>Chordata</taxon>
        <taxon>Craniata</taxon>
        <taxon>Vertebrata</taxon>
        <taxon>Euteleostomi</taxon>
        <taxon>Mammalia</taxon>
        <taxon>Eutheria</taxon>
        <taxon>Euarchontoglires</taxon>
        <taxon>Glires</taxon>
        <taxon>Rodentia</taxon>
        <taxon>Myomorpha</taxon>
        <taxon>Muroidea</taxon>
        <taxon>Muridae</taxon>
        <taxon>Murinae</taxon>
        <taxon>Mus</taxon>
        <taxon>Mus</taxon>
    </lineage>
</organism>
<dbReference type="EC" id="2.7.10.1"/>
<dbReference type="EMBL" id="M57683">
    <property type="protein sequence ID" value="AAA39733.1"/>
    <property type="molecule type" value="mRNA"/>
</dbReference>
<dbReference type="EMBL" id="M84607">
    <property type="protein sequence ID" value="AAA39904.1"/>
    <property type="molecule type" value="mRNA"/>
</dbReference>
<dbReference type="EMBL" id="AK081664">
    <property type="protein sequence ID" value="BAC38283.1"/>
    <property type="molecule type" value="mRNA"/>
</dbReference>
<dbReference type="EMBL" id="AK136490">
    <property type="protein sequence ID" value="BAE23004.1"/>
    <property type="molecule type" value="mRNA"/>
</dbReference>
<dbReference type="EMBL" id="AK147267">
    <property type="protein sequence ID" value="BAE27808.1"/>
    <property type="molecule type" value="mRNA"/>
</dbReference>
<dbReference type="EMBL" id="AK163952">
    <property type="protein sequence ID" value="BAE37548.1"/>
    <property type="molecule type" value="mRNA"/>
</dbReference>
<dbReference type="EMBL" id="BC053036">
    <property type="protein sequence ID" value="AAH53036.1"/>
    <property type="molecule type" value="mRNA"/>
</dbReference>
<dbReference type="CCDS" id="CCDS19351.1">
    <molecule id="P26618-1"/>
</dbReference>
<dbReference type="CCDS" id="CCDS89929.1">
    <molecule id="P26618-2"/>
</dbReference>
<dbReference type="PIR" id="I57511">
    <property type="entry name" value="S33727"/>
</dbReference>
<dbReference type="RefSeq" id="NP_001076785.1">
    <molecule id="P26618-1"/>
    <property type="nucleotide sequence ID" value="NM_001083316.2"/>
</dbReference>
<dbReference type="RefSeq" id="NP_001334647.1">
    <molecule id="P26618-2"/>
    <property type="nucleotide sequence ID" value="NM_001347718.1"/>
</dbReference>
<dbReference type="RefSeq" id="NP_001334648.1">
    <molecule id="P26618-2"/>
    <property type="nucleotide sequence ID" value="NM_001347719.1"/>
</dbReference>
<dbReference type="RefSeq" id="NP_035188.2">
    <molecule id="P26618-1"/>
    <property type="nucleotide sequence ID" value="NM_011058.3"/>
</dbReference>
<dbReference type="RefSeq" id="XP_006504324.1">
    <molecule id="P26618-1"/>
    <property type="nucleotide sequence ID" value="XM_006504261.5"/>
</dbReference>
<dbReference type="RefSeq" id="XP_006504325.1">
    <molecule id="P26618-1"/>
    <property type="nucleotide sequence ID" value="XM_006504262.5"/>
</dbReference>
<dbReference type="RefSeq" id="XP_006504326.1">
    <molecule id="P26618-1"/>
    <property type="nucleotide sequence ID" value="XM_006504263.5"/>
</dbReference>
<dbReference type="SMR" id="P26618"/>
<dbReference type="BioGRID" id="202088">
    <property type="interactions" value="8"/>
</dbReference>
<dbReference type="ComplexPortal" id="CPX-2899">
    <property type="entry name" value="PDGF receptor alpha - PDGF-AA complex"/>
</dbReference>
<dbReference type="ComplexPortal" id="CPX-2901">
    <property type="entry name" value="PDGF receptor alpha - PDGF-AB complex"/>
</dbReference>
<dbReference type="ComplexPortal" id="CPX-2903">
    <property type="entry name" value="PDGF receptor alpha-beta - PDGF-AB complex"/>
</dbReference>
<dbReference type="ComplexPortal" id="CPX-2906">
    <property type="entry name" value="PDGF receptor alpha - PDGF-BB complex"/>
</dbReference>
<dbReference type="ComplexPortal" id="CPX-2907">
    <property type="entry name" value="PDGF receptor alpha-beta - PDGF-BB complex"/>
</dbReference>
<dbReference type="ComplexPortal" id="CPX-2912">
    <property type="entry name" value="PDGF receptor alpha - PDGF-CC complex"/>
</dbReference>
<dbReference type="ComplexPortal" id="CPX-2913">
    <property type="entry name" value="PDGF receptor alpha-beta - PDGF-CC complex"/>
</dbReference>
<dbReference type="ComplexPortal" id="CPX-2916">
    <property type="entry name" value="PDGF receptor alpha-beta - PDGF-DD complex"/>
</dbReference>
<dbReference type="FunCoup" id="P26618">
    <property type="interactions" value="1904"/>
</dbReference>
<dbReference type="IntAct" id="P26618">
    <property type="interactions" value="2"/>
</dbReference>
<dbReference type="MINT" id="P26618"/>
<dbReference type="STRING" id="10090.ENSMUSP00000127173"/>
<dbReference type="BindingDB" id="P26618"/>
<dbReference type="ChEMBL" id="CHEMBL3466"/>
<dbReference type="GuidetoPHARMACOLOGY" id="1803"/>
<dbReference type="GlyCosmos" id="P26618">
    <property type="glycosylation" value="10 sites, No reported glycans"/>
</dbReference>
<dbReference type="GlyGen" id="P26618">
    <property type="glycosylation" value="10 sites, 4 N-linked glycans (4 sites)"/>
</dbReference>
<dbReference type="iPTMnet" id="P26618"/>
<dbReference type="PhosphoSitePlus" id="P26618"/>
<dbReference type="SwissPalm" id="P26618"/>
<dbReference type="jPOST" id="P26618"/>
<dbReference type="PaxDb" id="10090-ENSMUSP00000127173"/>
<dbReference type="PeptideAtlas" id="P26618"/>
<dbReference type="ProteomicsDB" id="301800">
    <molecule id="P26618-1"/>
</dbReference>
<dbReference type="ProteomicsDB" id="301801">
    <molecule id="P26618-2"/>
</dbReference>
<dbReference type="Pumba" id="P26618"/>
<dbReference type="ABCD" id="P26618">
    <property type="antibodies" value="4 sequenced antibodies"/>
</dbReference>
<dbReference type="Antibodypedia" id="1381">
    <property type="antibodies" value="2283 antibodies from 47 providers"/>
</dbReference>
<dbReference type="DNASU" id="18595"/>
<dbReference type="Ensembl" id="ENSMUST00000000476.15">
    <molecule id="P26618-1"/>
    <property type="protein sequence ID" value="ENSMUSP00000000476.9"/>
    <property type="gene ID" value="ENSMUSG00000029231.16"/>
</dbReference>
<dbReference type="Ensembl" id="ENSMUST00000168162.5">
    <molecule id="P26618-1"/>
    <property type="protein sequence ID" value="ENSMUSP00000127173.2"/>
    <property type="gene ID" value="ENSMUSG00000029231.16"/>
</dbReference>
<dbReference type="Ensembl" id="ENSMUST00000201711.4">
    <molecule id="P26618-2"/>
    <property type="protein sequence ID" value="ENSMUSP00000143891.2"/>
    <property type="gene ID" value="ENSMUSG00000029231.16"/>
</dbReference>
<dbReference type="Ensembl" id="ENSMUST00000202681.4">
    <molecule id="P26618-2"/>
    <property type="protein sequence ID" value="ENSMUSP00000143906.2"/>
    <property type="gene ID" value="ENSMUSG00000029231.16"/>
</dbReference>
<dbReference type="GeneID" id="18595"/>
<dbReference type="KEGG" id="mmu:18595"/>
<dbReference type="UCSC" id="uc008xub.1">
    <molecule id="P26618-2"/>
    <property type="organism name" value="mouse"/>
</dbReference>
<dbReference type="UCSC" id="uc008xuc.1">
    <molecule id="P26618-1"/>
    <property type="organism name" value="mouse"/>
</dbReference>
<dbReference type="AGR" id="MGI:97530"/>
<dbReference type="CTD" id="5156"/>
<dbReference type="MGI" id="MGI:97530">
    <property type="gene designation" value="Pdgfra"/>
</dbReference>
<dbReference type="VEuPathDB" id="HostDB:ENSMUSG00000029231"/>
<dbReference type="eggNOG" id="KOG0200">
    <property type="taxonomic scope" value="Eukaryota"/>
</dbReference>
<dbReference type="GeneTree" id="ENSGT00940000156021"/>
<dbReference type="HOGENOM" id="CLU_000288_49_0_1"/>
<dbReference type="InParanoid" id="P26618"/>
<dbReference type="OMA" id="PGLILCQ"/>
<dbReference type="OrthoDB" id="9936425at2759"/>
<dbReference type="PhylomeDB" id="P26618"/>
<dbReference type="TreeFam" id="TF325768"/>
<dbReference type="BRENDA" id="2.7.10.1">
    <property type="organism ID" value="3474"/>
</dbReference>
<dbReference type="Reactome" id="R-MMU-1257604">
    <property type="pathway name" value="PIP3 activates AKT signaling"/>
</dbReference>
<dbReference type="Reactome" id="R-MMU-186763">
    <property type="pathway name" value="Downstream signal transduction"/>
</dbReference>
<dbReference type="Reactome" id="R-MMU-186797">
    <property type="pathway name" value="Signaling by PDGF"/>
</dbReference>
<dbReference type="Reactome" id="R-MMU-5673001">
    <property type="pathway name" value="RAF/MAP kinase cascade"/>
</dbReference>
<dbReference type="Reactome" id="R-MMU-6811558">
    <property type="pathway name" value="PI5P, PP2A and IER3 Regulate PI3K/AKT Signaling"/>
</dbReference>
<dbReference type="BioGRID-ORCS" id="18595">
    <property type="hits" value="3 hits in 81 CRISPR screens"/>
</dbReference>
<dbReference type="ChiTaRS" id="Pdgfra">
    <property type="organism name" value="mouse"/>
</dbReference>
<dbReference type="PRO" id="PR:P26618"/>
<dbReference type="Proteomes" id="UP000000589">
    <property type="component" value="Chromosome 5"/>
</dbReference>
<dbReference type="RNAct" id="P26618">
    <property type="molecule type" value="protein"/>
</dbReference>
<dbReference type="Bgee" id="ENSMUSG00000029231">
    <property type="expression patterns" value="Expressed in ureter smooth muscle and 349 other cell types or tissues"/>
</dbReference>
<dbReference type="ExpressionAtlas" id="P26618">
    <property type="expression patterns" value="baseline and differential"/>
</dbReference>
<dbReference type="GO" id="GO:0030054">
    <property type="term" value="C:cell junction"/>
    <property type="evidence" value="ECO:0007669"/>
    <property type="project" value="Ensembl"/>
</dbReference>
<dbReference type="GO" id="GO:0009986">
    <property type="term" value="C:cell surface"/>
    <property type="evidence" value="ECO:0000314"/>
    <property type="project" value="BHF-UCL"/>
</dbReference>
<dbReference type="GO" id="GO:0005929">
    <property type="term" value="C:cilium"/>
    <property type="evidence" value="ECO:0000314"/>
    <property type="project" value="UniProtKB"/>
</dbReference>
<dbReference type="GO" id="GO:0005737">
    <property type="term" value="C:cytoplasm"/>
    <property type="evidence" value="ECO:0000314"/>
    <property type="project" value="MGI"/>
</dbReference>
<dbReference type="GO" id="GO:0005829">
    <property type="term" value="C:cytosol"/>
    <property type="evidence" value="ECO:0007669"/>
    <property type="project" value="Ensembl"/>
</dbReference>
<dbReference type="GO" id="GO:0009897">
    <property type="term" value="C:external side of plasma membrane"/>
    <property type="evidence" value="ECO:0000314"/>
    <property type="project" value="MGI"/>
</dbReference>
<dbReference type="GO" id="GO:0005794">
    <property type="term" value="C:Golgi apparatus"/>
    <property type="evidence" value="ECO:0000314"/>
    <property type="project" value="UniProtKB"/>
</dbReference>
<dbReference type="GO" id="GO:0005902">
    <property type="term" value="C:microvillus"/>
    <property type="evidence" value="ECO:0000314"/>
    <property type="project" value="MGI"/>
</dbReference>
<dbReference type="GO" id="GO:0016604">
    <property type="term" value="C:nuclear body"/>
    <property type="evidence" value="ECO:0007669"/>
    <property type="project" value="Ensembl"/>
</dbReference>
<dbReference type="GO" id="GO:0005634">
    <property type="term" value="C:nucleus"/>
    <property type="evidence" value="ECO:0000314"/>
    <property type="project" value="MGI"/>
</dbReference>
<dbReference type="GO" id="GO:0005886">
    <property type="term" value="C:plasma membrane"/>
    <property type="evidence" value="ECO:0000250"/>
    <property type="project" value="UniProtKB"/>
</dbReference>
<dbReference type="GO" id="GO:1990270">
    <property type="term" value="C:platelet-derived growth factor receptor-ligand complex"/>
    <property type="evidence" value="ECO:0007669"/>
    <property type="project" value="Ensembl"/>
</dbReference>
<dbReference type="GO" id="GO:0032991">
    <property type="term" value="C:protein-containing complex"/>
    <property type="evidence" value="ECO:0000266"/>
    <property type="project" value="MGI"/>
</dbReference>
<dbReference type="GO" id="GO:0005524">
    <property type="term" value="F:ATP binding"/>
    <property type="evidence" value="ECO:0007669"/>
    <property type="project" value="UniProtKB-KW"/>
</dbReference>
<dbReference type="GO" id="GO:0160185">
    <property type="term" value="F:phospholipase C activator activity"/>
    <property type="evidence" value="ECO:0007669"/>
    <property type="project" value="Ensembl"/>
</dbReference>
<dbReference type="GO" id="GO:0005018">
    <property type="term" value="F:platelet-derived growth factor alpha-receptor activity"/>
    <property type="evidence" value="ECO:0000314"/>
    <property type="project" value="UniProtKB"/>
</dbReference>
<dbReference type="GO" id="GO:0048407">
    <property type="term" value="F:platelet-derived growth factor binding"/>
    <property type="evidence" value="ECO:0000314"/>
    <property type="project" value="UniProtKB"/>
</dbReference>
<dbReference type="GO" id="GO:0005161">
    <property type="term" value="F:platelet-derived growth factor receptor binding"/>
    <property type="evidence" value="ECO:0007669"/>
    <property type="project" value="Ensembl"/>
</dbReference>
<dbReference type="GO" id="GO:0042803">
    <property type="term" value="F:protein homodimerization activity"/>
    <property type="evidence" value="ECO:0000250"/>
    <property type="project" value="UniProtKB"/>
</dbReference>
<dbReference type="GO" id="GO:0004672">
    <property type="term" value="F:protein kinase activity"/>
    <property type="evidence" value="ECO:0000266"/>
    <property type="project" value="MGI"/>
</dbReference>
<dbReference type="GO" id="GO:0044877">
    <property type="term" value="F:protein-containing complex binding"/>
    <property type="evidence" value="ECO:0000314"/>
    <property type="project" value="MGI"/>
</dbReference>
<dbReference type="GO" id="GO:0038085">
    <property type="term" value="F:vascular endothelial growth factor binding"/>
    <property type="evidence" value="ECO:0007669"/>
    <property type="project" value="Ensembl"/>
</dbReference>
<dbReference type="GO" id="GO:0005021">
    <property type="term" value="F:vascular endothelial growth factor receptor activity"/>
    <property type="evidence" value="ECO:0000250"/>
    <property type="project" value="UniProtKB"/>
</dbReference>
<dbReference type="GO" id="GO:0030325">
    <property type="term" value="P:adrenal gland development"/>
    <property type="evidence" value="ECO:0000316"/>
    <property type="project" value="MGI"/>
</dbReference>
<dbReference type="GO" id="GO:0009653">
    <property type="term" value="P:anatomical structure morphogenesis"/>
    <property type="evidence" value="ECO:0000315"/>
    <property type="project" value="MGI"/>
</dbReference>
<dbReference type="GO" id="GO:0009887">
    <property type="term" value="P:animal organ morphogenesis"/>
    <property type="evidence" value="ECO:0000315"/>
    <property type="project" value="MGI"/>
</dbReference>
<dbReference type="GO" id="GO:0055003">
    <property type="term" value="P:cardiac myofibril assembly"/>
    <property type="evidence" value="ECO:0000316"/>
    <property type="project" value="UniProtKB"/>
</dbReference>
<dbReference type="GO" id="GO:0060326">
    <property type="term" value="P:cell chemotaxis"/>
    <property type="evidence" value="ECO:0000315"/>
    <property type="project" value="UniProtKB"/>
</dbReference>
<dbReference type="GO" id="GO:0016477">
    <property type="term" value="P:cell migration"/>
    <property type="evidence" value="ECO:0000315"/>
    <property type="project" value="UniProtKB"/>
</dbReference>
<dbReference type="GO" id="GO:0071230">
    <property type="term" value="P:cellular response to amino acid stimulus"/>
    <property type="evidence" value="ECO:0000314"/>
    <property type="project" value="MGI"/>
</dbReference>
<dbReference type="GO" id="GO:0034614">
    <property type="term" value="P:cellular response to reactive oxygen species"/>
    <property type="evidence" value="ECO:0000266"/>
    <property type="project" value="MGI"/>
</dbReference>
<dbReference type="GO" id="GO:0048701">
    <property type="term" value="P:embryonic cranial skeleton morphogenesis"/>
    <property type="evidence" value="ECO:0000315"/>
    <property type="project" value="UniProtKB"/>
</dbReference>
<dbReference type="GO" id="GO:0048557">
    <property type="term" value="P:embryonic digestive tract morphogenesis"/>
    <property type="evidence" value="ECO:0000315"/>
    <property type="project" value="UniProtKB"/>
</dbReference>
<dbReference type="GO" id="GO:0008210">
    <property type="term" value="P:estrogen metabolic process"/>
    <property type="evidence" value="ECO:0000316"/>
    <property type="project" value="MGI"/>
</dbReference>
<dbReference type="GO" id="GO:0030198">
    <property type="term" value="P:extracellular matrix organization"/>
    <property type="evidence" value="ECO:0000315"/>
    <property type="project" value="MGI"/>
</dbReference>
<dbReference type="GO" id="GO:0060325">
    <property type="term" value="P:face morphogenesis"/>
    <property type="evidence" value="ECO:0000315"/>
    <property type="project" value="MGI"/>
</dbReference>
<dbReference type="GO" id="GO:0008585">
    <property type="term" value="P:female gonad development"/>
    <property type="evidence" value="ECO:0000316"/>
    <property type="project" value="MGI"/>
</dbReference>
<dbReference type="GO" id="GO:0002244">
    <property type="term" value="P:hematopoietic progenitor cell differentiation"/>
    <property type="evidence" value="ECO:0000315"/>
    <property type="project" value="MGI"/>
</dbReference>
<dbReference type="GO" id="GO:0001701">
    <property type="term" value="P:in utero embryonic development"/>
    <property type="evidence" value="ECO:0000315"/>
    <property type="project" value="MGI"/>
</dbReference>
<dbReference type="GO" id="GO:0033327">
    <property type="term" value="P:Leydig cell differentiation"/>
    <property type="evidence" value="ECO:0000315"/>
    <property type="project" value="MGI"/>
</dbReference>
<dbReference type="GO" id="GO:0030324">
    <property type="term" value="P:lung development"/>
    <property type="evidence" value="ECO:0000315"/>
    <property type="project" value="MGI"/>
</dbReference>
<dbReference type="GO" id="GO:0001553">
    <property type="term" value="P:luteinization"/>
    <property type="evidence" value="ECO:0000315"/>
    <property type="project" value="MGI"/>
</dbReference>
<dbReference type="GO" id="GO:0030539">
    <property type="term" value="P:male genitalia development"/>
    <property type="evidence" value="ECO:0000315"/>
    <property type="project" value="MGI"/>
</dbReference>
<dbReference type="GO" id="GO:0072277">
    <property type="term" value="P:metanephric glomerular capillary formation"/>
    <property type="evidence" value="ECO:0000316"/>
    <property type="project" value="UniProtKB"/>
</dbReference>
<dbReference type="GO" id="GO:0010544">
    <property type="term" value="P:negative regulation of platelet activation"/>
    <property type="evidence" value="ECO:0000250"/>
    <property type="project" value="UniProtKB"/>
</dbReference>
<dbReference type="GO" id="GO:0042475">
    <property type="term" value="P:odontogenesis of dentin-containing tooth"/>
    <property type="evidence" value="ECO:0000315"/>
    <property type="project" value="MGI"/>
</dbReference>
<dbReference type="GO" id="GO:0018108">
    <property type="term" value="P:peptidyl-tyrosine phosphorylation"/>
    <property type="evidence" value="ECO:0000314"/>
    <property type="project" value="UniProtKB"/>
</dbReference>
<dbReference type="GO" id="GO:0070527">
    <property type="term" value="P:platelet aggregation"/>
    <property type="evidence" value="ECO:0000250"/>
    <property type="project" value="UniProtKB"/>
</dbReference>
<dbReference type="GO" id="GO:0048008">
    <property type="term" value="P:platelet-derived growth factor receptor signaling pathway"/>
    <property type="evidence" value="ECO:0000315"/>
    <property type="project" value="MGI"/>
</dbReference>
<dbReference type="GO" id="GO:0035790">
    <property type="term" value="P:platelet-derived growth factor receptor-alpha signaling pathway"/>
    <property type="evidence" value="ECO:0000314"/>
    <property type="project" value="UniProtKB"/>
</dbReference>
<dbReference type="GO" id="GO:0050850">
    <property type="term" value="P:positive regulation of calcium-mediated signaling"/>
    <property type="evidence" value="ECO:0000250"/>
    <property type="project" value="UniProtKB"/>
</dbReference>
<dbReference type="GO" id="GO:0030335">
    <property type="term" value="P:positive regulation of cell migration"/>
    <property type="evidence" value="ECO:0000250"/>
    <property type="project" value="UniProtKB"/>
</dbReference>
<dbReference type="GO" id="GO:0008284">
    <property type="term" value="P:positive regulation of cell population proliferation"/>
    <property type="evidence" value="ECO:0000250"/>
    <property type="project" value="UniProtKB"/>
</dbReference>
<dbReference type="GO" id="GO:0038091">
    <property type="term" value="P:positive regulation of cell proliferation by VEGF-activated platelet derived growth factor receptor signaling pathway"/>
    <property type="evidence" value="ECO:0000250"/>
    <property type="project" value="BHF-UCL"/>
</dbReference>
<dbReference type="GO" id="GO:0050921">
    <property type="term" value="P:positive regulation of chemotaxis"/>
    <property type="evidence" value="ECO:0007669"/>
    <property type="project" value="Ensembl"/>
</dbReference>
<dbReference type="GO" id="GO:0070374">
    <property type="term" value="P:positive regulation of ERK1 and ERK2 cascade"/>
    <property type="evidence" value="ECO:0000250"/>
    <property type="project" value="UniProtKB"/>
</dbReference>
<dbReference type="GO" id="GO:0048146">
    <property type="term" value="P:positive regulation of fibroblast proliferation"/>
    <property type="evidence" value="ECO:0000250"/>
    <property type="project" value="UniProtKB"/>
</dbReference>
<dbReference type="GO" id="GO:0046777">
    <property type="term" value="P:protein autophosphorylation"/>
    <property type="evidence" value="ECO:0000314"/>
    <property type="project" value="UniProtKB"/>
</dbReference>
<dbReference type="GO" id="GO:2000739">
    <property type="term" value="P:regulation of mesenchymal stem cell differentiation"/>
    <property type="evidence" value="ECO:0000250"/>
    <property type="project" value="UniProtKB"/>
</dbReference>
<dbReference type="GO" id="GO:0061298">
    <property type="term" value="P:retina vasculature development in camera-type eye"/>
    <property type="evidence" value="ECO:0000316"/>
    <property type="project" value="UniProtKB"/>
</dbReference>
<dbReference type="GO" id="GO:0060021">
    <property type="term" value="P:roof of mouth development"/>
    <property type="evidence" value="ECO:0000315"/>
    <property type="project" value="MGI"/>
</dbReference>
<dbReference type="GO" id="GO:0023019">
    <property type="term" value="P:signal transduction involved in regulation of gene expression"/>
    <property type="evidence" value="ECO:0000314"/>
    <property type="project" value="MGI"/>
</dbReference>
<dbReference type="GO" id="GO:0048705">
    <property type="term" value="P:skeletal system morphogenesis"/>
    <property type="evidence" value="ECO:0000315"/>
    <property type="project" value="MGI"/>
</dbReference>
<dbReference type="GO" id="GO:0050872">
    <property type="term" value="P:white fat cell differentiation"/>
    <property type="evidence" value="ECO:0000315"/>
    <property type="project" value="MGI"/>
</dbReference>
<dbReference type="GO" id="GO:0042060">
    <property type="term" value="P:wound healing"/>
    <property type="evidence" value="ECO:0000315"/>
    <property type="project" value="UniProtKB"/>
</dbReference>
<dbReference type="CDD" id="cd05859">
    <property type="entry name" value="Ig4_PDGFR"/>
    <property type="match status" value="1"/>
</dbReference>
<dbReference type="CDD" id="cd05105">
    <property type="entry name" value="PTKc_PDGFR_alpha"/>
    <property type="match status" value="1"/>
</dbReference>
<dbReference type="FunFam" id="2.60.40.10:FF:000720">
    <property type="entry name" value="Platelet-derived growth factor receptor alpha"/>
    <property type="match status" value="1"/>
</dbReference>
<dbReference type="FunFam" id="2.60.40.10:FF:000725">
    <property type="entry name" value="Platelet-derived growth factor receptor alpha"/>
    <property type="match status" value="1"/>
</dbReference>
<dbReference type="FunFam" id="2.60.40.10:FF:000776">
    <property type="entry name" value="Platelet-derived growth factor receptor alpha"/>
    <property type="match status" value="1"/>
</dbReference>
<dbReference type="FunFam" id="2.60.40.10:FF:000832">
    <property type="entry name" value="Platelet-derived growth factor receptor alpha"/>
    <property type="match status" value="1"/>
</dbReference>
<dbReference type="FunFam" id="3.30.200.20:FF:000025">
    <property type="entry name" value="Platelet-derived growth factor receptor alpha"/>
    <property type="match status" value="1"/>
</dbReference>
<dbReference type="FunFam" id="2.60.40.10:FF:000223">
    <property type="entry name" value="Platelet-derived growth factor receptor beta"/>
    <property type="match status" value="1"/>
</dbReference>
<dbReference type="FunFam" id="1.10.510.10:FF:001735">
    <property type="entry name" value="T0011027 isoform 1"/>
    <property type="match status" value="1"/>
</dbReference>
<dbReference type="Gene3D" id="2.60.40.10">
    <property type="entry name" value="Immunoglobulins"/>
    <property type="match status" value="5"/>
</dbReference>
<dbReference type="Gene3D" id="3.30.200.20">
    <property type="entry name" value="Phosphorylase Kinase, domain 1"/>
    <property type="match status" value="1"/>
</dbReference>
<dbReference type="Gene3D" id="1.10.510.10">
    <property type="entry name" value="Transferase(Phosphotransferase) domain 1"/>
    <property type="match status" value="1"/>
</dbReference>
<dbReference type="InterPro" id="IPR007110">
    <property type="entry name" value="Ig-like_dom"/>
</dbReference>
<dbReference type="InterPro" id="IPR036179">
    <property type="entry name" value="Ig-like_dom_sf"/>
</dbReference>
<dbReference type="InterPro" id="IPR013783">
    <property type="entry name" value="Ig-like_fold"/>
</dbReference>
<dbReference type="InterPro" id="IPR013098">
    <property type="entry name" value="Ig_I-set"/>
</dbReference>
<dbReference type="InterPro" id="IPR003599">
    <property type="entry name" value="Ig_sub"/>
</dbReference>
<dbReference type="InterPro" id="IPR003598">
    <property type="entry name" value="Ig_sub2"/>
</dbReference>
<dbReference type="InterPro" id="IPR011009">
    <property type="entry name" value="Kinase-like_dom_sf"/>
</dbReference>
<dbReference type="InterPro" id="IPR027290">
    <property type="entry name" value="PDGFRA"/>
</dbReference>
<dbReference type="InterPro" id="IPR000719">
    <property type="entry name" value="Prot_kinase_dom"/>
</dbReference>
<dbReference type="InterPro" id="IPR017441">
    <property type="entry name" value="Protein_kinase_ATP_BS"/>
</dbReference>
<dbReference type="InterPro" id="IPR050122">
    <property type="entry name" value="RTK"/>
</dbReference>
<dbReference type="InterPro" id="IPR001245">
    <property type="entry name" value="Ser-Thr/Tyr_kinase_cat_dom"/>
</dbReference>
<dbReference type="InterPro" id="IPR008266">
    <property type="entry name" value="Tyr_kinase_AS"/>
</dbReference>
<dbReference type="InterPro" id="IPR020635">
    <property type="entry name" value="Tyr_kinase_cat_dom"/>
</dbReference>
<dbReference type="InterPro" id="IPR001824">
    <property type="entry name" value="Tyr_kinase_rcpt_3_CS"/>
</dbReference>
<dbReference type="PANTHER" id="PTHR24416:SF52">
    <property type="entry name" value="PLATELET-DERIVED GROWTH FACTOR RECEPTOR ALPHA"/>
    <property type="match status" value="1"/>
</dbReference>
<dbReference type="PANTHER" id="PTHR24416">
    <property type="entry name" value="TYROSINE-PROTEIN KINASE RECEPTOR"/>
    <property type="match status" value="1"/>
</dbReference>
<dbReference type="Pfam" id="PF07679">
    <property type="entry name" value="I-set"/>
    <property type="match status" value="2"/>
</dbReference>
<dbReference type="Pfam" id="PF25305">
    <property type="entry name" value="Ig_PDGFR_d4"/>
    <property type="match status" value="1"/>
</dbReference>
<dbReference type="Pfam" id="PF07714">
    <property type="entry name" value="PK_Tyr_Ser-Thr"/>
    <property type="match status" value="1"/>
</dbReference>
<dbReference type="Pfam" id="PF21339">
    <property type="entry name" value="VEGFR-1-like_Ig-like"/>
    <property type="match status" value="1"/>
</dbReference>
<dbReference type="PIRSF" id="PIRSF500950">
    <property type="entry name" value="Alpha-PDGF_receptor"/>
    <property type="match status" value="1"/>
</dbReference>
<dbReference type="PIRSF" id="PIRSF000615">
    <property type="entry name" value="TyrPK_CSF1-R"/>
    <property type="match status" value="1"/>
</dbReference>
<dbReference type="PRINTS" id="PR01832">
    <property type="entry name" value="VEGFRECEPTOR"/>
</dbReference>
<dbReference type="SMART" id="SM00409">
    <property type="entry name" value="IG"/>
    <property type="match status" value="4"/>
</dbReference>
<dbReference type="SMART" id="SM00408">
    <property type="entry name" value="IGc2"/>
    <property type="match status" value="3"/>
</dbReference>
<dbReference type="SMART" id="SM00219">
    <property type="entry name" value="TyrKc"/>
    <property type="match status" value="1"/>
</dbReference>
<dbReference type="SUPFAM" id="SSF48726">
    <property type="entry name" value="Immunoglobulin"/>
    <property type="match status" value="4"/>
</dbReference>
<dbReference type="SUPFAM" id="SSF56112">
    <property type="entry name" value="Protein kinase-like (PK-like)"/>
    <property type="match status" value="1"/>
</dbReference>
<dbReference type="PROSITE" id="PS50835">
    <property type="entry name" value="IG_LIKE"/>
    <property type="match status" value="3"/>
</dbReference>
<dbReference type="PROSITE" id="PS00107">
    <property type="entry name" value="PROTEIN_KINASE_ATP"/>
    <property type="match status" value="1"/>
</dbReference>
<dbReference type="PROSITE" id="PS50011">
    <property type="entry name" value="PROTEIN_KINASE_DOM"/>
    <property type="match status" value="1"/>
</dbReference>
<dbReference type="PROSITE" id="PS00109">
    <property type="entry name" value="PROTEIN_KINASE_TYR"/>
    <property type="match status" value="1"/>
</dbReference>
<dbReference type="PROSITE" id="PS00240">
    <property type="entry name" value="RECEPTOR_TYR_KIN_III"/>
    <property type="match status" value="1"/>
</dbReference>
<accession>P26618</accession>
<accession>Q3TQ37</accession>
<accession>Q62046</accession>
<accession>Q7TSJ3</accession>
<accession>Q8C4N3</accession>
<reference key="1">
    <citation type="journal article" date="1990" name="Mol. Cell. Biol.">
        <title>Retinoic acid promotes transcription of the platelet-derived growth factor alpha-receptor gene.</title>
        <authorList>
            <person name="Stiles C.D."/>
            <person name="Wang C."/>
        </authorList>
    </citation>
    <scope>NUCLEOTIDE SEQUENCE [MRNA] (ISOFORM 1)</scope>
</reference>
<reference key="2">
    <citation type="journal article" date="1992" name="Oncogene">
        <title>Mouse platelet-derived growth factor alpha receptor: sequence, tissue-specific expression and correlation with metastatic phenotype.</title>
        <authorList>
            <person name="Do M.S."/>
            <person name="Fitzer-Attas C."/>
            <person name="Gubbay J."/>
            <person name="Greenfeld L."/>
            <person name="Feldman M."/>
            <person name="Eisenbach L."/>
        </authorList>
    </citation>
    <scope>NUCLEOTIDE SEQUENCE [MRNA] (ISOFORM 1)</scope>
</reference>
<reference key="3">
    <citation type="journal article" date="2005" name="Science">
        <title>The transcriptional landscape of the mammalian genome.</title>
        <authorList>
            <person name="Carninci P."/>
            <person name="Kasukawa T."/>
            <person name="Katayama S."/>
            <person name="Gough J."/>
            <person name="Frith M.C."/>
            <person name="Maeda N."/>
            <person name="Oyama R."/>
            <person name="Ravasi T."/>
            <person name="Lenhard B."/>
            <person name="Wells C."/>
            <person name="Kodzius R."/>
            <person name="Shimokawa K."/>
            <person name="Bajic V.B."/>
            <person name="Brenner S.E."/>
            <person name="Batalov S."/>
            <person name="Forrest A.R."/>
            <person name="Zavolan M."/>
            <person name="Davis M.J."/>
            <person name="Wilming L.G."/>
            <person name="Aidinis V."/>
            <person name="Allen J.E."/>
            <person name="Ambesi-Impiombato A."/>
            <person name="Apweiler R."/>
            <person name="Aturaliya R.N."/>
            <person name="Bailey T.L."/>
            <person name="Bansal M."/>
            <person name="Baxter L."/>
            <person name="Beisel K.W."/>
            <person name="Bersano T."/>
            <person name="Bono H."/>
            <person name="Chalk A.M."/>
            <person name="Chiu K.P."/>
            <person name="Choudhary V."/>
            <person name="Christoffels A."/>
            <person name="Clutterbuck D.R."/>
            <person name="Crowe M.L."/>
            <person name="Dalla E."/>
            <person name="Dalrymple B.P."/>
            <person name="de Bono B."/>
            <person name="Della Gatta G."/>
            <person name="di Bernardo D."/>
            <person name="Down T."/>
            <person name="Engstrom P."/>
            <person name="Fagiolini M."/>
            <person name="Faulkner G."/>
            <person name="Fletcher C.F."/>
            <person name="Fukushima T."/>
            <person name="Furuno M."/>
            <person name="Futaki S."/>
            <person name="Gariboldi M."/>
            <person name="Georgii-Hemming P."/>
            <person name="Gingeras T.R."/>
            <person name="Gojobori T."/>
            <person name="Green R.E."/>
            <person name="Gustincich S."/>
            <person name="Harbers M."/>
            <person name="Hayashi Y."/>
            <person name="Hensch T.K."/>
            <person name="Hirokawa N."/>
            <person name="Hill D."/>
            <person name="Huminiecki L."/>
            <person name="Iacono M."/>
            <person name="Ikeo K."/>
            <person name="Iwama A."/>
            <person name="Ishikawa T."/>
            <person name="Jakt M."/>
            <person name="Kanapin A."/>
            <person name="Katoh M."/>
            <person name="Kawasawa Y."/>
            <person name="Kelso J."/>
            <person name="Kitamura H."/>
            <person name="Kitano H."/>
            <person name="Kollias G."/>
            <person name="Krishnan S.P."/>
            <person name="Kruger A."/>
            <person name="Kummerfeld S.K."/>
            <person name="Kurochkin I.V."/>
            <person name="Lareau L.F."/>
            <person name="Lazarevic D."/>
            <person name="Lipovich L."/>
            <person name="Liu J."/>
            <person name="Liuni S."/>
            <person name="McWilliam S."/>
            <person name="Madan Babu M."/>
            <person name="Madera M."/>
            <person name="Marchionni L."/>
            <person name="Matsuda H."/>
            <person name="Matsuzawa S."/>
            <person name="Miki H."/>
            <person name="Mignone F."/>
            <person name="Miyake S."/>
            <person name="Morris K."/>
            <person name="Mottagui-Tabar S."/>
            <person name="Mulder N."/>
            <person name="Nakano N."/>
            <person name="Nakauchi H."/>
            <person name="Ng P."/>
            <person name="Nilsson R."/>
            <person name="Nishiguchi S."/>
            <person name="Nishikawa S."/>
            <person name="Nori F."/>
            <person name="Ohara O."/>
            <person name="Okazaki Y."/>
            <person name="Orlando V."/>
            <person name="Pang K.C."/>
            <person name="Pavan W.J."/>
            <person name="Pavesi G."/>
            <person name="Pesole G."/>
            <person name="Petrovsky N."/>
            <person name="Piazza S."/>
            <person name="Reed J."/>
            <person name="Reid J.F."/>
            <person name="Ring B.Z."/>
            <person name="Ringwald M."/>
            <person name="Rost B."/>
            <person name="Ruan Y."/>
            <person name="Salzberg S.L."/>
            <person name="Sandelin A."/>
            <person name="Schneider C."/>
            <person name="Schoenbach C."/>
            <person name="Sekiguchi K."/>
            <person name="Semple C.A."/>
            <person name="Seno S."/>
            <person name="Sessa L."/>
            <person name="Sheng Y."/>
            <person name="Shibata Y."/>
            <person name="Shimada H."/>
            <person name="Shimada K."/>
            <person name="Silva D."/>
            <person name="Sinclair B."/>
            <person name="Sperling S."/>
            <person name="Stupka E."/>
            <person name="Sugiura K."/>
            <person name="Sultana R."/>
            <person name="Takenaka Y."/>
            <person name="Taki K."/>
            <person name="Tammoja K."/>
            <person name="Tan S.L."/>
            <person name="Tang S."/>
            <person name="Taylor M.S."/>
            <person name="Tegner J."/>
            <person name="Teichmann S.A."/>
            <person name="Ueda H.R."/>
            <person name="van Nimwegen E."/>
            <person name="Verardo R."/>
            <person name="Wei C.L."/>
            <person name="Yagi K."/>
            <person name="Yamanishi H."/>
            <person name="Zabarovsky E."/>
            <person name="Zhu S."/>
            <person name="Zimmer A."/>
            <person name="Hide W."/>
            <person name="Bult C."/>
            <person name="Grimmond S.M."/>
            <person name="Teasdale R.D."/>
            <person name="Liu E.T."/>
            <person name="Brusic V."/>
            <person name="Quackenbush J."/>
            <person name="Wahlestedt C."/>
            <person name="Mattick J.S."/>
            <person name="Hume D.A."/>
            <person name="Kai C."/>
            <person name="Sasaki D."/>
            <person name="Tomaru Y."/>
            <person name="Fukuda S."/>
            <person name="Kanamori-Katayama M."/>
            <person name="Suzuki M."/>
            <person name="Aoki J."/>
            <person name="Arakawa T."/>
            <person name="Iida J."/>
            <person name="Imamura K."/>
            <person name="Itoh M."/>
            <person name="Kato T."/>
            <person name="Kawaji H."/>
            <person name="Kawagashira N."/>
            <person name="Kawashima T."/>
            <person name="Kojima M."/>
            <person name="Kondo S."/>
            <person name="Konno H."/>
            <person name="Nakano K."/>
            <person name="Ninomiya N."/>
            <person name="Nishio T."/>
            <person name="Okada M."/>
            <person name="Plessy C."/>
            <person name="Shibata K."/>
            <person name="Shiraki T."/>
            <person name="Suzuki S."/>
            <person name="Tagami M."/>
            <person name="Waki K."/>
            <person name="Watahiki A."/>
            <person name="Okamura-Oho Y."/>
            <person name="Suzuki H."/>
            <person name="Kawai J."/>
            <person name="Hayashizaki Y."/>
        </authorList>
    </citation>
    <scope>NUCLEOTIDE SEQUENCE [LARGE SCALE MRNA] (ISOFORMS 1 AND 2)</scope>
    <source>
        <strain>C57BL/6J</strain>
        <tissue>Cerebellum</tissue>
        <tissue>Colon</tissue>
        <tissue>Embryonic head</tissue>
        <tissue>Placenta</tissue>
    </source>
</reference>
<reference key="4">
    <citation type="journal article" date="2004" name="Genome Res.">
        <title>The status, quality, and expansion of the NIH full-length cDNA project: the Mammalian Gene Collection (MGC).</title>
        <authorList>
            <consortium name="The MGC Project Team"/>
        </authorList>
    </citation>
    <scope>NUCLEOTIDE SEQUENCE [LARGE SCALE MRNA] (ISOFORM 1)</scope>
    <source>
        <strain>C57BL/6J</strain>
        <tissue>Brain</tissue>
    </source>
</reference>
<reference key="5">
    <citation type="journal article" date="1997" name="Development">
        <title>The PDGF alpha receptor is required for neural crest cell development and for normal patterning of the somites.</title>
        <authorList>
            <person name="Soriano P."/>
        </authorList>
    </citation>
    <scope>DISRUPTION PHENOTYPE</scope>
    <scope>FUNCTION</scope>
</reference>
<reference key="6">
    <citation type="journal article" date="2000" name="Development">
        <title>Abnormal gastrointestinal development in PDGF-A and PDGFR-(alpha) deficient mice implicates a novel mesenchymal structure with putative instructive properties in villus morphogenesis.</title>
        <authorList>
            <person name="Karlsson L."/>
            <person name="Lindahl P."/>
            <person name="Heath J.K."/>
            <person name="Betsholtz C."/>
        </authorList>
    </citation>
    <scope>DISRUPTION PHENOTYPE</scope>
    <scope>FUNCTION</scope>
</reference>
<reference key="7">
    <citation type="journal article" date="2000" name="Exp. Cell Res.">
        <title>Platelet-derived growth factor-mediated signaling through the Shb adaptor protein: effects on cytoskeletal organization.</title>
        <authorList>
            <person name="Hooshmand-Rad R."/>
            <person name="Lu L."/>
            <person name="Heldin C.-H."/>
            <person name="Claesson-Welsh L."/>
            <person name="Welsh M."/>
        </authorList>
    </citation>
    <scope>INTERACTION WITH SHB</scope>
</reference>
<reference key="8">
    <citation type="journal article" date="2003" name="J. Am. Soc. Nephrol.">
        <title>Obstructive uropathy in mice and humans: potential role for PDGF-D in the progression of tubulointerstitial injury.</title>
        <authorList>
            <person name="Taneda S."/>
            <person name="Hudkins K.L."/>
            <person name="Topouzis S."/>
            <person name="Gilbertson D.G."/>
            <person name="Ophascharoensuk V."/>
            <person name="Truong L."/>
            <person name="Johnson R.J."/>
            <person name="Alpers C.E."/>
        </authorList>
    </citation>
    <scope>TISSUE SPECIFICITY</scope>
</reference>
<reference key="9">
    <citation type="journal article" date="2004" name="Cytokine Growth Factor Rev.">
        <title>Insight into the physiological functions of PDGF through genetic studies in mice.</title>
        <authorList>
            <person name="Betsholtz C."/>
        </authorList>
    </citation>
    <scope>REVIEW ON FUNCTION</scope>
    <scope>DISRUPTION PHENOTYPE</scope>
</reference>
<reference key="10">
    <citation type="journal article" date="2008" name="PLoS ONE">
        <title>Comprehensive dissection of PDGF-PDGFR signaling pathways in PDGFR genetically defined cells.</title>
        <authorList>
            <person name="Wu E."/>
            <person name="Palmer N."/>
            <person name="Tian Z."/>
            <person name="Moseman A.P."/>
            <person name="Galdzicki M."/>
            <person name="Wang X."/>
            <person name="Berger B."/>
            <person name="Zhang H."/>
            <person name="Kohane I.S."/>
        </authorList>
    </citation>
    <scope>FUNCTION</scope>
</reference>
<reference key="11">
    <citation type="journal article" date="2010" name="Cell">
        <title>A tissue-specific atlas of mouse protein phosphorylation and expression.</title>
        <authorList>
            <person name="Huttlin E.L."/>
            <person name="Jedrychowski M.P."/>
            <person name="Elias J.E."/>
            <person name="Goswami T."/>
            <person name="Rad R."/>
            <person name="Beausoleil S.A."/>
            <person name="Villen J."/>
            <person name="Haas W."/>
            <person name="Sowa M.E."/>
            <person name="Gygi S.P."/>
        </authorList>
    </citation>
    <scope>IDENTIFICATION BY MASS SPECTROMETRY [LARGE SCALE ANALYSIS]</scope>
    <source>
        <tissue>Lung</tissue>
    </source>
</reference>
<reference key="12">
    <citation type="journal article" date="2010" name="Cell. Physiol. Biochem.">
        <title>Directional cell migration and chemotaxis in wound healing response to PDGF-AA are coordinated by the primary cilium in fibroblasts.</title>
        <authorList>
            <person name="Schneider L."/>
            <person name="Cammer M."/>
            <person name="Lehman J."/>
            <person name="Nielsen S.K."/>
            <person name="Guerra C.F."/>
            <person name="Veland I.R."/>
            <person name="Stock C."/>
            <person name="Hoffmann E.K."/>
            <person name="Yoder B.K."/>
            <person name="Schwab A."/>
            <person name="Satir P."/>
            <person name="Christensen S.T."/>
        </authorList>
    </citation>
    <scope>FUNCTION</scope>
</reference>
<reference key="13">
    <citation type="journal article" date="2018" name="J. Cell Biol.">
        <title>IFT20 modulates ciliary PDGFRalpha signaling by regulating the stability of Cbl E3 ubiquitin ligases.</title>
        <authorList>
            <person name="Schmid F.M."/>
            <person name="Schou K.B."/>
            <person name="Vilhelm M.J."/>
            <person name="Holm M.S."/>
            <person name="Breslin L."/>
            <person name="Farinelli P."/>
            <person name="Larsen L.A."/>
            <person name="Andersen J.S."/>
            <person name="Pedersen L.B."/>
            <person name="Christensen S.T."/>
        </authorList>
    </citation>
    <scope>UBIQUITINATION</scope>
    <scope>INDUCTION</scope>
    <scope>SUBCELLULAR LOCATION</scope>
</reference>
<reference key="14">
    <citation type="journal article" date="2019" name="J. Invest. Dermatol.">
        <title>Tumor Endothelial Marker 1 (TEM1/Endosialin/CD248) Enhances Wound Healing by Interacting with Platelet-Derived Growth Factor Receptors.</title>
        <authorList>
            <person name="Hong Y.K."/>
            <person name="Lee Y.C."/>
            <person name="Cheng T.L."/>
            <person name="Lai C.H."/>
            <person name="Hsu C.K."/>
            <person name="Kuo C.H."/>
            <person name="Hsu Y.Y."/>
            <person name="Li J.T."/>
            <person name="Chang B.I."/>
            <person name="Ma C.Y."/>
            <person name="Lin S.W."/>
            <person name="Wang K.C."/>
            <person name="Shi G.Y."/>
            <person name="Wu H.L."/>
        </authorList>
    </citation>
    <scope>FUNCTION</scope>
    <scope>INTERACTION WITH CD248</scope>
</reference>
<proteinExistence type="evidence at protein level"/>